<proteinExistence type="inferred from homology"/>
<protein>
    <recommendedName>
        <fullName evidence="1">Biotin synthase</fullName>
        <ecNumber evidence="1">2.8.1.6</ecNumber>
    </recommendedName>
</protein>
<evidence type="ECO:0000255" key="1">
    <source>
        <dbReference type="HAMAP-Rule" id="MF_01694"/>
    </source>
</evidence>
<evidence type="ECO:0000255" key="2">
    <source>
        <dbReference type="PROSITE-ProRule" id="PRU01266"/>
    </source>
</evidence>
<gene>
    <name evidence="1" type="primary">bioB</name>
    <name type="ordered locus">SynWH7803_1530</name>
</gene>
<accession>A5GLZ1</accession>
<name>BIOB_SYNPW</name>
<reference key="1">
    <citation type="submission" date="2006-05" db="EMBL/GenBank/DDBJ databases">
        <authorList>
            <consortium name="Genoscope"/>
        </authorList>
    </citation>
    <scope>NUCLEOTIDE SEQUENCE [LARGE SCALE GENOMIC DNA]</scope>
    <source>
        <strain>WH7803</strain>
    </source>
</reference>
<comment type="function">
    <text evidence="1">Catalyzes the conversion of dethiobiotin (DTB) to biotin by the insertion of a sulfur atom into dethiobiotin via a radical-based mechanism.</text>
</comment>
<comment type="catalytic activity">
    <reaction evidence="1">
        <text>(4R,5S)-dethiobiotin + (sulfur carrier)-SH + 2 reduced [2Fe-2S]-[ferredoxin] + 2 S-adenosyl-L-methionine = (sulfur carrier)-H + biotin + 2 5'-deoxyadenosine + 2 L-methionine + 2 oxidized [2Fe-2S]-[ferredoxin]</text>
        <dbReference type="Rhea" id="RHEA:22060"/>
        <dbReference type="Rhea" id="RHEA-COMP:10000"/>
        <dbReference type="Rhea" id="RHEA-COMP:10001"/>
        <dbReference type="Rhea" id="RHEA-COMP:14737"/>
        <dbReference type="Rhea" id="RHEA-COMP:14739"/>
        <dbReference type="ChEBI" id="CHEBI:17319"/>
        <dbReference type="ChEBI" id="CHEBI:29917"/>
        <dbReference type="ChEBI" id="CHEBI:33737"/>
        <dbReference type="ChEBI" id="CHEBI:33738"/>
        <dbReference type="ChEBI" id="CHEBI:57586"/>
        <dbReference type="ChEBI" id="CHEBI:57844"/>
        <dbReference type="ChEBI" id="CHEBI:59789"/>
        <dbReference type="ChEBI" id="CHEBI:64428"/>
        <dbReference type="ChEBI" id="CHEBI:149473"/>
        <dbReference type="EC" id="2.8.1.6"/>
    </reaction>
</comment>
<comment type="cofactor">
    <cofactor evidence="1">
        <name>[4Fe-4S] cluster</name>
        <dbReference type="ChEBI" id="CHEBI:49883"/>
    </cofactor>
    <text evidence="1">Binds 1 [4Fe-4S] cluster. The cluster is coordinated with 3 cysteines and an exchangeable S-adenosyl-L-methionine.</text>
</comment>
<comment type="cofactor">
    <cofactor evidence="1">
        <name>[2Fe-2S] cluster</name>
        <dbReference type="ChEBI" id="CHEBI:190135"/>
    </cofactor>
    <text evidence="1">Binds 1 [2Fe-2S] cluster. The cluster is coordinated with 3 cysteines and 1 arginine.</text>
</comment>
<comment type="pathway">
    <text evidence="1">Cofactor biosynthesis; biotin biosynthesis; biotin from 7,8-diaminononanoate: step 2/2.</text>
</comment>
<comment type="subunit">
    <text evidence="1">Homodimer.</text>
</comment>
<comment type="similarity">
    <text evidence="1">Belongs to the radical SAM superfamily. Biotin synthase family.</text>
</comment>
<feature type="chain" id="PRO_0000381677" description="Biotin synthase">
    <location>
        <begin position="1"/>
        <end position="325"/>
    </location>
</feature>
<feature type="domain" description="Radical SAM core" evidence="2">
    <location>
        <begin position="42"/>
        <end position="270"/>
    </location>
</feature>
<feature type="binding site" evidence="1">
    <location>
        <position position="57"/>
    </location>
    <ligand>
        <name>[4Fe-4S] cluster</name>
        <dbReference type="ChEBI" id="CHEBI:49883"/>
        <note>4Fe-4S-S-AdoMet</note>
    </ligand>
</feature>
<feature type="binding site" evidence="1">
    <location>
        <position position="61"/>
    </location>
    <ligand>
        <name>[4Fe-4S] cluster</name>
        <dbReference type="ChEBI" id="CHEBI:49883"/>
        <note>4Fe-4S-S-AdoMet</note>
    </ligand>
</feature>
<feature type="binding site" evidence="1">
    <location>
        <position position="64"/>
    </location>
    <ligand>
        <name>[4Fe-4S] cluster</name>
        <dbReference type="ChEBI" id="CHEBI:49883"/>
        <note>4Fe-4S-S-AdoMet</note>
    </ligand>
</feature>
<feature type="binding site" evidence="1">
    <location>
        <position position="101"/>
    </location>
    <ligand>
        <name>[2Fe-2S] cluster</name>
        <dbReference type="ChEBI" id="CHEBI:190135"/>
    </ligand>
</feature>
<feature type="binding site" evidence="1">
    <location>
        <position position="133"/>
    </location>
    <ligand>
        <name>[2Fe-2S] cluster</name>
        <dbReference type="ChEBI" id="CHEBI:190135"/>
    </ligand>
</feature>
<feature type="binding site" evidence="1">
    <location>
        <position position="193"/>
    </location>
    <ligand>
        <name>[2Fe-2S] cluster</name>
        <dbReference type="ChEBI" id="CHEBI:190135"/>
    </ligand>
</feature>
<feature type="binding site" evidence="1">
    <location>
        <position position="265"/>
    </location>
    <ligand>
        <name>[2Fe-2S] cluster</name>
        <dbReference type="ChEBI" id="CHEBI:190135"/>
    </ligand>
</feature>
<dbReference type="EC" id="2.8.1.6" evidence="1"/>
<dbReference type="EMBL" id="CT971583">
    <property type="protein sequence ID" value="CAK23956.1"/>
    <property type="molecule type" value="Genomic_DNA"/>
</dbReference>
<dbReference type="SMR" id="A5GLZ1"/>
<dbReference type="STRING" id="32051.SynWH7803_1530"/>
<dbReference type="KEGG" id="syx:SynWH7803_1530"/>
<dbReference type="eggNOG" id="COG0502">
    <property type="taxonomic scope" value="Bacteria"/>
</dbReference>
<dbReference type="HOGENOM" id="CLU_033172_1_2_3"/>
<dbReference type="OrthoDB" id="9786826at2"/>
<dbReference type="UniPathway" id="UPA00078">
    <property type="reaction ID" value="UER00162"/>
</dbReference>
<dbReference type="Proteomes" id="UP000001566">
    <property type="component" value="Chromosome"/>
</dbReference>
<dbReference type="GO" id="GO:0051537">
    <property type="term" value="F:2 iron, 2 sulfur cluster binding"/>
    <property type="evidence" value="ECO:0007669"/>
    <property type="project" value="UniProtKB-KW"/>
</dbReference>
<dbReference type="GO" id="GO:0051539">
    <property type="term" value="F:4 iron, 4 sulfur cluster binding"/>
    <property type="evidence" value="ECO:0007669"/>
    <property type="project" value="UniProtKB-KW"/>
</dbReference>
<dbReference type="GO" id="GO:0004076">
    <property type="term" value="F:biotin synthase activity"/>
    <property type="evidence" value="ECO:0007669"/>
    <property type="project" value="UniProtKB-UniRule"/>
</dbReference>
<dbReference type="GO" id="GO:0005506">
    <property type="term" value="F:iron ion binding"/>
    <property type="evidence" value="ECO:0007669"/>
    <property type="project" value="UniProtKB-UniRule"/>
</dbReference>
<dbReference type="GO" id="GO:0009102">
    <property type="term" value="P:biotin biosynthetic process"/>
    <property type="evidence" value="ECO:0007669"/>
    <property type="project" value="UniProtKB-UniRule"/>
</dbReference>
<dbReference type="CDD" id="cd01335">
    <property type="entry name" value="Radical_SAM"/>
    <property type="match status" value="1"/>
</dbReference>
<dbReference type="Gene3D" id="3.20.20.70">
    <property type="entry name" value="Aldolase class I"/>
    <property type="match status" value="1"/>
</dbReference>
<dbReference type="HAMAP" id="MF_01694">
    <property type="entry name" value="BioB"/>
    <property type="match status" value="1"/>
</dbReference>
<dbReference type="InterPro" id="IPR013785">
    <property type="entry name" value="Aldolase_TIM"/>
</dbReference>
<dbReference type="InterPro" id="IPR010722">
    <property type="entry name" value="BATS_dom"/>
</dbReference>
<dbReference type="InterPro" id="IPR002684">
    <property type="entry name" value="Biotin_synth/BioAB"/>
</dbReference>
<dbReference type="InterPro" id="IPR024177">
    <property type="entry name" value="Biotin_synthase"/>
</dbReference>
<dbReference type="InterPro" id="IPR006638">
    <property type="entry name" value="Elp3/MiaA/NifB-like_rSAM"/>
</dbReference>
<dbReference type="InterPro" id="IPR007197">
    <property type="entry name" value="rSAM"/>
</dbReference>
<dbReference type="NCBIfam" id="TIGR00433">
    <property type="entry name" value="bioB"/>
    <property type="match status" value="1"/>
</dbReference>
<dbReference type="PANTHER" id="PTHR22976">
    <property type="entry name" value="BIOTIN SYNTHASE"/>
    <property type="match status" value="1"/>
</dbReference>
<dbReference type="PANTHER" id="PTHR22976:SF2">
    <property type="entry name" value="BIOTIN SYNTHASE, MITOCHONDRIAL"/>
    <property type="match status" value="1"/>
</dbReference>
<dbReference type="Pfam" id="PF06968">
    <property type="entry name" value="BATS"/>
    <property type="match status" value="1"/>
</dbReference>
<dbReference type="Pfam" id="PF04055">
    <property type="entry name" value="Radical_SAM"/>
    <property type="match status" value="1"/>
</dbReference>
<dbReference type="PIRSF" id="PIRSF001619">
    <property type="entry name" value="Biotin_synth"/>
    <property type="match status" value="1"/>
</dbReference>
<dbReference type="SFLD" id="SFLDF00272">
    <property type="entry name" value="biotin_synthase"/>
    <property type="match status" value="1"/>
</dbReference>
<dbReference type="SFLD" id="SFLDG01278">
    <property type="entry name" value="biotin_synthase_like"/>
    <property type="match status" value="1"/>
</dbReference>
<dbReference type="SMART" id="SM00876">
    <property type="entry name" value="BATS"/>
    <property type="match status" value="1"/>
</dbReference>
<dbReference type="SMART" id="SM00729">
    <property type="entry name" value="Elp3"/>
    <property type="match status" value="1"/>
</dbReference>
<dbReference type="SUPFAM" id="SSF102114">
    <property type="entry name" value="Radical SAM enzymes"/>
    <property type="match status" value="1"/>
</dbReference>
<dbReference type="PROSITE" id="PS51918">
    <property type="entry name" value="RADICAL_SAM"/>
    <property type="match status" value="1"/>
</dbReference>
<organism>
    <name type="scientific">Synechococcus sp. (strain WH7803)</name>
    <dbReference type="NCBI Taxonomy" id="32051"/>
    <lineage>
        <taxon>Bacteria</taxon>
        <taxon>Bacillati</taxon>
        <taxon>Cyanobacteriota</taxon>
        <taxon>Cyanophyceae</taxon>
        <taxon>Synechococcales</taxon>
        <taxon>Synechococcaceae</taxon>
        <taxon>Synechococcus</taxon>
    </lineage>
</organism>
<keyword id="KW-0001">2Fe-2S</keyword>
<keyword id="KW-0004">4Fe-4S</keyword>
<keyword id="KW-0093">Biotin biosynthesis</keyword>
<keyword id="KW-0408">Iron</keyword>
<keyword id="KW-0411">Iron-sulfur</keyword>
<keyword id="KW-0479">Metal-binding</keyword>
<keyword id="KW-1185">Reference proteome</keyword>
<keyword id="KW-0949">S-adenosyl-L-methionine</keyword>
<keyword id="KW-0808">Transferase</keyword>
<sequence>MSEQVDLRHDWTLAEIEALLQSPLMDLLWKAQAVHRSANPGYKVQLASLLSVKTGGCEEDCAYCPQSMHHSSDVTGQPDLEVKAVLDRARVAAEAGADRFCMGWAWREIREGPAFESMLSMVRGVRELGLEACVTAGMLTDSQAERLAEAGLTAYNHNLDTSPEHYDSIITTRTYQERLETLQRVRQAGVTLCCGGIIGMGESVRDRASMLQVLACLDPHPESVPINALVAVEGTPLEAQPSIDPLELVRMVAVARILMPQSRVRLSAGREQLNREAQILCLQAGADSIFYGDSLLTTSNPAVESDRALLAAAGVQASWHESAAA</sequence>